<keyword id="KW-0131">Cell cycle</keyword>
<keyword id="KW-0132">Cell division</keyword>
<keyword id="KW-0175">Coiled coil</keyword>
<keyword id="KW-0963">Cytoplasm</keyword>
<keyword id="KW-0206">Cytoskeleton</keyword>
<keyword id="KW-0342">GTP-binding</keyword>
<keyword id="KW-0488">Methylation</keyword>
<keyword id="KW-0547">Nucleotide-binding</keyword>
<keyword id="KW-0597">Phosphoprotein</keyword>
<keyword id="KW-1185">Reference proteome</keyword>
<reference key="1">
    <citation type="submission" date="2001-02" db="EMBL/GenBank/DDBJ databases">
        <title>Isolation of full-length cDNA clones from macaque brain cDNA libraries.</title>
        <authorList>
            <person name="Osada N."/>
            <person name="Hida M."/>
            <person name="Kusuda J."/>
            <person name="Tanuma R."/>
            <person name="Iseki K."/>
            <person name="Hirai M."/>
            <person name="Terao K."/>
            <person name="Suzuki Y."/>
            <person name="Sugano S."/>
            <person name="Hashimoto K."/>
        </authorList>
    </citation>
    <scope>NUCLEOTIDE SEQUENCE [LARGE SCALE MRNA]</scope>
    <source>
        <tissue>Frontal cortex</tissue>
    </source>
</reference>
<protein>
    <recommendedName>
        <fullName>Septin-5</fullName>
    </recommendedName>
</protein>
<gene>
    <name evidence="2" type="primary">SEPTIN5</name>
    <name type="synonym">SEPT5</name>
    <name type="ORF">QflA-14636</name>
</gene>
<feature type="chain" id="PRO_0000173522" description="Septin-5">
    <location>
        <begin position="1"/>
        <end position="378"/>
    </location>
</feature>
<feature type="domain" description="Septin-type G" evidence="5">
    <location>
        <begin position="50"/>
        <end position="323"/>
    </location>
</feature>
<feature type="region of interest" description="G1 motif" evidence="5">
    <location>
        <begin position="60"/>
        <end position="67"/>
    </location>
</feature>
<feature type="region of interest" description="G3 motif" evidence="5">
    <location>
        <begin position="117"/>
        <end position="120"/>
    </location>
</feature>
<feature type="region of interest" description="G4 motif" evidence="5">
    <location>
        <begin position="198"/>
        <end position="201"/>
    </location>
</feature>
<feature type="coiled-coil region" evidence="4">
    <location>
        <begin position="347"/>
        <end position="378"/>
    </location>
</feature>
<feature type="binding site" evidence="1">
    <location>
        <begin position="60"/>
        <end position="67"/>
    </location>
    <ligand>
        <name>GTP</name>
        <dbReference type="ChEBI" id="CHEBI:37565"/>
    </ligand>
</feature>
<feature type="binding site" evidence="1">
    <location>
        <position position="94"/>
    </location>
    <ligand>
        <name>GTP</name>
        <dbReference type="ChEBI" id="CHEBI:37565"/>
    </ligand>
</feature>
<feature type="binding site" evidence="1">
    <location>
        <position position="120"/>
    </location>
    <ligand>
        <name>GTP</name>
        <dbReference type="ChEBI" id="CHEBI:37565"/>
    </ligand>
</feature>
<feature type="binding site" evidence="1">
    <location>
        <begin position="199"/>
        <end position="207"/>
    </location>
    <ligand>
        <name>GTP</name>
        <dbReference type="ChEBI" id="CHEBI:37565"/>
    </ligand>
</feature>
<feature type="binding site" evidence="1">
    <location>
        <position position="257"/>
    </location>
    <ligand>
        <name>GTP</name>
        <dbReference type="ChEBI" id="CHEBI:37565"/>
    </ligand>
</feature>
<feature type="binding site" evidence="1">
    <location>
        <position position="272"/>
    </location>
    <ligand>
        <name>GTP</name>
        <dbReference type="ChEBI" id="CHEBI:37565"/>
    </ligand>
</feature>
<feature type="modified residue" description="Omega-N-methylarginine" evidence="3">
    <location>
        <position position="177"/>
    </location>
</feature>
<feature type="modified residue" description="Phosphoserine" evidence="2">
    <location>
        <position position="234"/>
    </location>
</feature>
<feature type="modified residue" description="Phosphoserine" evidence="2">
    <location>
        <position position="336"/>
    </location>
</feature>
<feature type="modified residue" description="Phosphothreonine" evidence="3">
    <location>
        <position position="345"/>
    </location>
</feature>
<evidence type="ECO:0000250" key="1"/>
<evidence type="ECO:0000250" key="2">
    <source>
        <dbReference type="UniProtKB" id="Q99719"/>
    </source>
</evidence>
<evidence type="ECO:0000250" key="3">
    <source>
        <dbReference type="UniProtKB" id="Q9Z2Q6"/>
    </source>
</evidence>
<evidence type="ECO:0000255" key="4"/>
<evidence type="ECO:0000255" key="5">
    <source>
        <dbReference type="PROSITE-ProRule" id="PRU01056"/>
    </source>
</evidence>
<evidence type="ECO:0000305" key="6"/>
<name>SEPT5_MACFA</name>
<comment type="function">
    <text evidence="1 6">Filament-forming cytoskeletal GTPase (By similarity). May play a role in cytokinesis (Potential). May play a role in platelet secretion (By similarity).</text>
</comment>
<comment type="subunit">
    <text evidence="1 3">Septins polymerize into heterooligomeric protein complexes that form filaments, and can associate with cellular membranes, actin filaments and microtubules. GTPase activity is required for filament formation. Interacts with SEPTIN2 and SEPTIN5. In platelets, associated with a complex containing STX4. Interacts with PRKN; this interaction leads to SEPTIN5 ubiquitination and degradation (By similarity). Interacts with DYRK1A (By similarity). Interacts with STX1A; in the cerebellar cortex (By similarity).</text>
</comment>
<comment type="subcellular location">
    <subcellularLocation>
        <location evidence="1">Cytoplasm</location>
    </subcellularLocation>
    <subcellularLocation>
        <location evidence="1">Cytoplasm</location>
        <location evidence="1">Cytoskeleton</location>
    </subcellularLocation>
</comment>
<comment type="PTM">
    <text evidence="3">Phosphorylated by DYRK1A.</text>
</comment>
<comment type="similarity">
    <text evidence="5">Belongs to the TRAFAC class TrmE-Era-EngA-EngB-Septin-like GTPase superfamily. Septin GTPase family.</text>
</comment>
<accession>Q9BGQ3</accession>
<organism>
    <name type="scientific">Macaca fascicularis</name>
    <name type="common">Crab-eating macaque</name>
    <name type="synonym">Cynomolgus monkey</name>
    <dbReference type="NCBI Taxonomy" id="9541"/>
    <lineage>
        <taxon>Eukaryota</taxon>
        <taxon>Metazoa</taxon>
        <taxon>Chordata</taxon>
        <taxon>Craniata</taxon>
        <taxon>Vertebrata</taxon>
        <taxon>Euteleostomi</taxon>
        <taxon>Mammalia</taxon>
        <taxon>Eutheria</taxon>
        <taxon>Euarchontoglires</taxon>
        <taxon>Primates</taxon>
        <taxon>Haplorrhini</taxon>
        <taxon>Catarrhini</taxon>
        <taxon>Cercopithecidae</taxon>
        <taxon>Cercopithecinae</taxon>
        <taxon>Macaca</taxon>
    </lineage>
</organism>
<dbReference type="EMBL" id="AB056419">
    <property type="protein sequence ID" value="BAB33077.1"/>
    <property type="molecule type" value="mRNA"/>
</dbReference>
<dbReference type="SMR" id="Q9BGQ3"/>
<dbReference type="STRING" id="9541.ENSMFAP00000037829"/>
<dbReference type="eggNOG" id="KOG2655">
    <property type="taxonomic scope" value="Eukaryota"/>
</dbReference>
<dbReference type="Proteomes" id="UP000233100">
    <property type="component" value="Unplaced"/>
</dbReference>
<dbReference type="GO" id="GO:0005886">
    <property type="term" value="C:plasma membrane"/>
    <property type="evidence" value="ECO:0000250"/>
    <property type="project" value="UniProtKB"/>
</dbReference>
<dbReference type="GO" id="GO:0098793">
    <property type="term" value="C:presynapse"/>
    <property type="evidence" value="ECO:0000250"/>
    <property type="project" value="UniProtKB"/>
</dbReference>
<dbReference type="GO" id="GO:0031105">
    <property type="term" value="C:septin complex"/>
    <property type="evidence" value="ECO:0000250"/>
    <property type="project" value="UniProtKB"/>
</dbReference>
<dbReference type="GO" id="GO:0008021">
    <property type="term" value="C:synaptic vesicle"/>
    <property type="evidence" value="ECO:0000250"/>
    <property type="project" value="UniProtKB"/>
</dbReference>
<dbReference type="GO" id="GO:0005525">
    <property type="term" value="F:GTP binding"/>
    <property type="evidence" value="ECO:0007669"/>
    <property type="project" value="UniProtKB-KW"/>
</dbReference>
<dbReference type="GO" id="GO:0030534">
    <property type="term" value="P:adult behavior"/>
    <property type="evidence" value="ECO:0000250"/>
    <property type="project" value="UniProtKB"/>
</dbReference>
<dbReference type="GO" id="GO:0051301">
    <property type="term" value="P:cell division"/>
    <property type="evidence" value="ECO:0007669"/>
    <property type="project" value="UniProtKB-KW"/>
</dbReference>
<dbReference type="GO" id="GO:0017157">
    <property type="term" value="P:regulation of exocytosis"/>
    <property type="evidence" value="ECO:0000250"/>
    <property type="project" value="UniProtKB"/>
</dbReference>
<dbReference type="GO" id="GO:0035176">
    <property type="term" value="P:social behavior"/>
    <property type="evidence" value="ECO:0000250"/>
    <property type="project" value="UniProtKB"/>
</dbReference>
<dbReference type="CDD" id="cd01850">
    <property type="entry name" value="CDC_Septin"/>
    <property type="match status" value="1"/>
</dbReference>
<dbReference type="FunFam" id="3.40.50.300:FF:000064">
    <property type="entry name" value="Septin 4"/>
    <property type="match status" value="1"/>
</dbReference>
<dbReference type="Gene3D" id="3.40.50.300">
    <property type="entry name" value="P-loop containing nucleotide triphosphate hydrolases"/>
    <property type="match status" value="1"/>
</dbReference>
<dbReference type="InterPro" id="IPR030379">
    <property type="entry name" value="G_SEPTIN_dom"/>
</dbReference>
<dbReference type="InterPro" id="IPR027417">
    <property type="entry name" value="P-loop_NTPase"/>
</dbReference>
<dbReference type="InterPro" id="IPR016491">
    <property type="entry name" value="Septin"/>
</dbReference>
<dbReference type="PANTHER" id="PTHR18884">
    <property type="entry name" value="SEPTIN"/>
    <property type="match status" value="1"/>
</dbReference>
<dbReference type="Pfam" id="PF00735">
    <property type="entry name" value="Septin"/>
    <property type="match status" value="1"/>
</dbReference>
<dbReference type="PIRSF" id="PIRSF006698">
    <property type="entry name" value="Septin"/>
    <property type="match status" value="1"/>
</dbReference>
<dbReference type="SUPFAM" id="SSF52540">
    <property type="entry name" value="P-loop containing nucleoside triphosphate hydrolases"/>
    <property type="match status" value="1"/>
</dbReference>
<dbReference type="PROSITE" id="PS51719">
    <property type="entry name" value="G_SEPTIN"/>
    <property type="match status" value="1"/>
</dbReference>
<sequence length="378" mass="43846">MDSLAAPQDRLVEQLLSPRTQAQRRLKDIDKQYVGFATLPNQVHRKSVKKGFDFTLMVAGESGLGKSTLVHSLFLTDLYKDRKLLSAEERISQTVEILKHTVDIEEKGVKLKLTIVDTPGFGDAVDNTECWKPITDYVDQQFEQYFRDESGLNRKNIQDNRVHCCLYFISPFGHGLRPVDVGFMKALHEKVNIVPLIAKADCLVPSEIRKLKERIREEIDKFGIHVYQFPECDSDEDEDFKQQDRELKESAPFAVIGSNTVVEAKGQRVRGRLYPWGIVEVENQAHCDFVKLRNMLIRTHMHDLKDVTCDVHYENYRAHCIQQMTSKLTQDSRMESPIPILPLPTPDAETEKLIRMKDEELRRMQEMLQRMKQQMQDQ</sequence>
<proteinExistence type="evidence at transcript level"/>